<gene>
    <name type="primary">DYNAP</name>
    <name type="synonym">C18orf26</name>
</gene>
<organism>
    <name type="scientific">Homo sapiens</name>
    <name type="common">Human</name>
    <dbReference type="NCBI Taxonomy" id="9606"/>
    <lineage>
        <taxon>Eukaryota</taxon>
        <taxon>Metazoa</taxon>
        <taxon>Chordata</taxon>
        <taxon>Craniata</taxon>
        <taxon>Vertebrata</taxon>
        <taxon>Euteleostomi</taxon>
        <taxon>Mammalia</taxon>
        <taxon>Eutheria</taxon>
        <taxon>Euarchontoglires</taxon>
        <taxon>Primates</taxon>
        <taxon>Haplorrhini</taxon>
        <taxon>Catarrhini</taxon>
        <taxon>Hominidae</taxon>
        <taxon>Homo</taxon>
    </lineage>
</organism>
<comment type="function">
    <text evidence="3">Plays a role in the regulation of cell proliferation. Promotes activation of the AKT1 signaling pathway. Promotes phosphorylation of AKT1 at 'Ser-473'.</text>
</comment>
<comment type="subunit">
    <text evidence="3">Interacts with DCTN1 and DCTN2.</text>
</comment>
<comment type="subcellular location">
    <subcellularLocation>
        <location evidence="3">Golgi apparatus membrane</location>
        <topology evidence="3">Single-pass membrane protein</topology>
    </subcellularLocation>
    <subcellularLocation>
        <location evidence="3">Cell membrane</location>
        <topology evidence="3">Single-pass membrane protein</topology>
    </subcellularLocation>
    <text>Concentrated at cell-cell borders. Localizes at membranes in a microtubule-dependent manner.</text>
</comment>
<comment type="tissue specificity">
    <text evidence="3">Expressed in fibroblast and numerous cancer cell lines (at protein level).</text>
</comment>
<dbReference type="EMBL" id="AK096425">
    <property type="protein sequence ID" value="BAC04784.1"/>
    <property type="molecule type" value="mRNA"/>
</dbReference>
<dbReference type="EMBL" id="AC091135">
    <property type="status" value="NOT_ANNOTATED_CDS"/>
    <property type="molecule type" value="Genomic_DNA"/>
</dbReference>
<dbReference type="RefSeq" id="NP_775900.1">
    <property type="nucleotide sequence ID" value="NM_173629.2"/>
</dbReference>
<dbReference type="SMR" id="Q8N1N2"/>
<dbReference type="FunCoup" id="Q8N1N2">
    <property type="interactions" value="4"/>
</dbReference>
<dbReference type="STRING" id="9606.ENSP00000315265"/>
<dbReference type="GlyGen" id="Q8N1N2">
    <property type="glycosylation" value="1 site"/>
</dbReference>
<dbReference type="PhosphoSitePlus" id="Q8N1N2"/>
<dbReference type="BioMuta" id="DYNAP"/>
<dbReference type="DMDM" id="73620598"/>
<dbReference type="PaxDb" id="9606-ENSP00000315265"/>
<dbReference type="Antibodypedia" id="2651">
    <property type="antibodies" value="68 antibodies from 13 providers"/>
</dbReference>
<dbReference type="DNASU" id="284254"/>
<dbReference type="Ensembl" id="ENST00000321600.1">
    <property type="protein sequence ID" value="ENSP00000315265.1"/>
    <property type="gene ID" value="ENSG00000178690.4"/>
</dbReference>
<dbReference type="GeneID" id="284254"/>
<dbReference type="KEGG" id="hsa:284254"/>
<dbReference type="UCSC" id="uc002lfq.1">
    <property type="organism name" value="human"/>
</dbReference>
<dbReference type="AGR" id="HGNC:26808"/>
<dbReference type="CTD" id="284254"/>
<dbReference type="DisGeNET" id="284254"/>
<dbReference type="GeneCards" id="DYNAP"/>
<dbReference type="HGNC" id="HGNC:26808">
    <property type="gene designation" value="DYNAP"/>
</dbReference>
<dbReference type="HPA" id="ENSG00000178690">
    <property type="expression patterns" value="Tissue enriched (esophagus)"/>
</dbReference>
<dbReference type="MIM" id="619421">
    <property type="type" value="gene"/>
</dbReference>
<dbReference type="neXtProt" id="NX_Q8N1N2"/>
<dbReference type="OpenTargets" id="ENSG00000178690"/>
<dbReference type="PharmGKB" id="PA134946407"/>
<dbReference type="VEuPathDB" id="HostDB:ENSG00000178690"/>
<dbReference type="eggNOG" id="ENOG502RTZD">
    <property type="taxonomic scope" value="Eukaryota"/>
</dbReference>
<dbReference type="GeneTree" id="ENSGT00400000022381"/>
<dbReference type="HOGENOM" id="CLU_121237_0_0_1"/>
<dbReference type="InParanoid" id="Q8N1N2"/>
<dbReference type="OMA" id="SSICWCP"/>
<dbReference type="OrthoDB" id="9809784at2759"/>
<dbReference type="PAN-GO" id="Q8N1N2">
    <property type="GO annotations" value="3 GO annotations based on evolutionary models"/>
</dbReference>
<dbReference type="PhylomeDB" id="Q8N1N2"/>
<dbReference type="TreeFam" id="TF338599"/>
<dbReference type="PathwayCommons" id="Q8N1N2"/>
<dbReference type="SignaLink" id="Q8N1N2"/>
<dbReference type="BioGRID-ORCS" id="284254">
    <property type="hits" value="7 hits in 1133 CRISPR screens"/>
</dbReference>
<dbReference type="ChiTaRS" id="DYNAP">
    <property type="organism name" value="human"/>
</dbReference>
<dbReference type="GenomeRNAi" id="284254"/>
<dbReference type="Pharos" id="Q8N1N2">
    <property type="development level" value="Tbio"/>
</dbReference>
<dbReference type="PRO" id="PR:Q8N1N2"/>
<dbReference type="Proteomes" id="UP000005640">
    <property type="component" value="Chromosome 18"/>
</dbReference>
<dbReference type="RNAct" id="Q8N1N2">
    <property type="molecule type" value="protein"/>
</dbReference>
<dbReference type="Bgee" id="ENSG00000178690">
    <property type="expression patterns" value="Expressed in lower esophagus mucosa and 58 other cell types or tissues"/>
</dbReference>
<dbReference type="ExpressionAtlas" id="Q8N1N2">
    <property type="expression patterns" value="baseline and differential"/>
</dbReference>
<dbReference type="GO" id="GO:0005794">
    <property type="term" value="C:Golgi apparatus"/>
    <property type="evidence" value="ECO:0000314"/>
    <property type="project" value="UniProtKB"/>
</dbReference>
<dbReference type="GO" id="GO:0000139">
    <property type="term" value="C:Golgi membrane"/>
    <property type="evidence" value="ECO:0007669"/>
    <property type="project" value="UniProtKB-SubCell"/>
</dbReference>
<dbReference type="GO" id="GO:0005886">
    <property type="term" value="C:plasma membrane"/>
    <property type="evidence" value="ECO:0000314"/>
    <property type="project" value="UniProtKB"/>
</dbReference>
<dbReference type="GO" id="GO:0032148">
    <property type="term" value="P:activation of protein kinase B activity"/>
    <property type="evidence" value="ECO:0000314"/>
    <property type="project" value="UniProtKB"/>
</dbReference>
<dbReference type="GO" id="GO:1901625">
    <property type="term" value="P:cellular response to ergosterol"/>
    <property type="evidence" value="ECO:0000314"/>
    <property type="project" value="UniProtKB"/>
</dbReference>
<dbReference type="GO" id="GO:0008284">
    <property type="term" value="P:positive regulation of cell population proliferation"/>
    <property type="evidence" value="ECO:0000314"/>
    <property type="project" value="UniProtKB"/>
</dbReference>
<dbReference type="GO" id="GO:0042981">
    <property type="term" value="P:regulation of apoptotic process"/>
    <property type="evidence" value="ECO:0000314"/>
    <property type="project" value="UniProtKB"/>
</dbReference>
<dbReference type="InterPro" id="IPR031379">
    <property type="entry name" value="CLLAC"/>
</dbReference>
<dbReference type="InterPro" id="IPR053297">
    <property type="entry name" value="Dynactin-associated"/>
</dbReference>
<dbReference type="PANTHER" id="PTHR35349">
    <property type="entry name" value="DYNACTIN-ASSOCIATED PROTEIN"/>
    <property type="match status" value="1"/>
</dbReference>
<dbReference type="PANTHER" id="PTHR35349:SF7">
    <property type="entry name" value="DYNACTIN-ASSOCIATED PROTEIN"/>
    <property type="match status" value="1"/>
</dbReference>
<dbReference type="Pfam" id="PF15675">
    <property type="entry name" value="CLLAC"/>
    <property type="match status" value="1"/>
</dbReference>
<sequence>MVADIKGNEQIEKYSWREACDTGSSRMDRKHGKYILNVEHSENQPPITHPNDQEAHSSICWCLPSNDITSDVSPNLTGVCVNPGILAHSRCLQSESCNTQVKEYCRNDWSMWKVFLACLLACVIMTAIGVLIICLVNNKGSANSSIVIQLSTNDGECVTVKPGTPSPACPPTMTTTSTVPASTATESTTSTATAATTSTEPITVAPTDHL</sequence>
<protein>
    <recommendedName>
        <fullName>Dynactin-associated protein</fullName>
        <shortName>Full</shortName>
    </recommendedName>
</protein>
<proteinExistence type="evidence at protein level"/>
<accession>Q8N1N2</accession>
<evidence type="ECO:0000255" key="1"/>
<evidence type="ECO:0000256" key="2">
    <source>
        <dbReference type="SAM" id="MobiDB-lite"/>
    </source>
</evidence>
<evidence type="ECO:0000269" key="3">
    <source>
    </source>
</evidence>
<name>DYNAP_HUMAN</name>
<keyword id="KW-1003">Cell membrane</keyword>
<keyword id="KW-0333">Golgi apparatus</keyword>
<keyword id="KW-0472">Membrane</keyword>
<keyword id="KW-1185">Reference proteome</keyword>
<keyword id="KW-0735">Signal-anchor</keyword>
<keyword id="KW-0812">Transmembrane</keyword>
<keyword id="KW-1133">Transmembrane helix</keyword>
<reference key="1">
    <citation type="journal article" date="2004" name="Nat. Genet.">
        <title>Complete sequencing and characterization of 21,243 full-length human cDNAs.</title>
        <authorList>
            <person name="Ota T."/>
            <person name="Suzuki Y."/>
            <person name="Nishikawa T."/>
            <person name="Otsuki T."/>
            <person name="Sugiyama T."/>
            <person name="Irie R."/>
            <person name="Wakamatsu A."/>
            <person name="Hayashi K."/>
            <person name="Sato H."/>
            <person name="Nagai K."/>
            <person name="Kimura K."/>
            <person name="Makita H."/>
            <person name="Sekine M."/>
            <person name="Obayashi M."/>
            <person name="Nishi T."/>
            <person name="Shibahara T."/>
            <person name="Tanaka T."/>
            <person name="Ishii S."/>
            <person name="Yamamoto J."/>
            <person name="Saito K."/>
            <person name="Kawai Y."/>
            <person name="Isono Y."/>
            <person name="Nakamura Y."/>
            <person name="Nagahari K."/>
            <person name="Murakami K."/>
            <person name="Yasuda T."/>
            <person name="Iwayanagi T."/>
            <person name="Wagatsuma M."/>
            <person name="Shiratori A."/>
            <person name="Sudo H."/>
            <person name="Hosoiri T."/>
            <person name="Kaku Y."/>
            <person name="Kodaira H."/>
            <person name="Kondo H."/>
            <person name="Sugawara M."/>
            <person name="Takahashi M."/>
            <person name="Kanda K."/>
            <person name="Yokoi T."/>
            <person name="Furuya T."/>
            <person name="Kikkawa E."/>
            <person name="Omura Y."/>
            <person name="Abe K."/>
            <person name="Kamihara K."/>
            <person name="Katsuta N."/>
            <person name="Sato K."/>
            <person name="Tanikawa M."/>
            <person name="Yamazaki M."/>
            <person name="Ninomiya K."/>
            <person name="Ishibashi T."/>
            <person name="Yamashita H."/>
            <person name="Murakawa K."/>
            <person name="Fujimori K."/>
            <person name="Tanai H."/>
            <person name="Kimata M."/>
            <person name="Watanabe M."/>
            <person name="Hiraoka S."/>
            <person name="Chiba Y."/>
            <person name="Ishida S."/>
            <person name="Ono Y."/>
            <person name="Takiguchi S."/>
            <person name="Watanabe S."/>
            <person name="Yosida M."/>
            <person name="Hotuta T."/>
            <person name="Kusano J."/>
            <person name="Kanehori K."/>
            <person name="Takahashi-Fujii A."/>
            <person name="Hara H."/>
            <person name="Tanase T.-O."/>
            <person name="Nomura Y."/>
            <person name="Togiya S."/>
            <person name="Komai F."/>
            <person name="Hara R."/>
            <person name="Takeuchi K."/>
            <person name="Arita M."/>
            <person name="Imose N."/>
            <person name="Musashino K."/>
            <person name="Yuuki H."/>
            <person name="Oshima A."/>
            <person name="Sasaki N."/>
            <person name="Aotsuka S."/>
            <person name="Yoshikawa Y."/>
            <person name="Matsunawa H."/>
            <person name="Ichihara T."/>
            <person name="Shiohata N."/>
            <person name="Sano S."/>
            <person name="Moriya S."/>
            <person name="Momiyama H."/>
            <person name="Satoh N."/>
            <person name="Takami S."/>
            <person name="Terashima Y."/>
            <person name="Suzuki O."/>
            <person name="Nakagawa S."/>
            <person name="Senoh A."/>
            <person name="Mizoguchi H."/>
            <person name="Goto Y."/>
            <person name="Shimizu F."/>
            <person name="Wakebe H."/>
            <person name="Hishigaki H."/>
            <person name="Watanabe T."/>
            <person name="Sugiyama A."/>
            <person name="Takemoto M."/>
            <person name="Kawakami B."/>
            <person name="Yamazaki M."/>
            <person name="Watanabe K."/>
            <person name="Kumagai A."/>
            <person name="Itakura S."/>
            <person name="Fukuzumi Y."/>
            <person name="Fujimori Y."/>
            <person name="Komiyama M."/>
            <person name="Tashiro H."/>
            <person name="Tanigami A."/>
            <person name="Fujiwara T."/>
            <person name="Ono T."/>
            <person name="Yamada K."/>
            <person name="Fujii Y."/>
            <person name="Ozaki K."/>
            <person name="Hirao M."/>
            <person name="Ohmori Y."/>
            <person name="Kawabata A."/>
            <person name="Hikiji T."/>
            <person name="Kobatake N."/>
            <person name="Inagaki H."/>
            <person name="Ikema Y."/>
            <person name="Okamoto S."/>
            <person name="Okitani R."/>
            <person name="Kawakami T."/>
            <person name="Noguchi S."/>
            <person name="Itoh T."/>
            <person name="Shigeta K."/>
            <person name="Senba T."/>
            <person name="Matsumura K."/>
            <person name="Nakajima Y."/>
            <person name="Mizuno T."/>
            <person name="Morinaga M."/>
            <person name="Sasaki M."/>
            <person name="Togashi T."/>
            <person name="Oyama M."/>
            <person name="Hata H."/>
            <person name="Watanabe M."/>
            <person name="Komatsu T."/>
            <person name="Mizushima-Sugano J."/>
            <person name="Satoh T."/>
            <person name="Shirai Y."/>
            <person name="Takahashi Y."/>
            <person name="Nakagawa K."/>
            <person name="Okumura K."/>
            <person name="Nagase T."/>
            <person name="Nomura N."/>
            <person name="Kikuchi H."/>
            <person name="Masuho Y."/>
            <person name="Yamashita R."/>
            <person name="Nakai K."/>
            <person name="Yada T."/>
            <person name="Nakamura Y."/>
            <person name="Ohara O."/>
            <person name="Isogai T."/>
            <person name="Sugano S."/>
        </authorList>
    </citation>
    <scope>NUCLEOTIDE SEQUENCE [LARGE SCALE MRNA]</scope>
    <source>
        <tissue>Tongue</tissue>
    </source>
</reference>
<reference key="2">
    <citation type="journal article" date="2005" name="Nature">
        <title>DNA sequence and analysis of human chromosome 18.</title>
        <authorList>
            <person name="Nusbaum C."/>
            <person name="Zody M.C."/>
            <person name="Borowsky M.L."/>
            <person name="Kamal M."/>
            <person name="Kodira C.D."/>
            <person name="Taylor T.D."/>
            <person name="Whittaker C.A."/>
            <person name="Chang J.L."/>
            <person name="Cuomo C.A."/>
            <person name="Dewar K."/>
            <person name="FitzGerald M.G."/>
            <person name="Yang X."/>
            <person name="Abouelleil A."/>
            <person name="Allen N.R."/>
            <person name="Anderson S."/>
            <person name="Bloom T."/>
            <person name="Bugalter B."/>
            <person name="Butler J."/>
            <person name="Cook A."/>
            <person name="DeCaprio D."/>
            <person name="Engels R."/>
            <person name="Garber M."/>
            <person name="Gnirke A."/>
            <person name="Hafez N."/>
            <person name="Hall J.L."/>
            <person name="Norman C.H."/>
            <person name="Itoh T."/>
            <person name="Jaffe D.B."/>
            <person name="Kuroki Y."/>
            <person name="Lehoczky J."/>
            <person name="Lui A."/>
            <person name="Macdonald P."/>
            <person name="Mauceli E."/>
            <person name="Mikkelsen T.S."/>
            <person name="Naylor J.W."/>
            <person name="Nicol R."/>
            <person name="Nguyen C."/>
            <person name="Noguchi H."/>
            <person name="O'Leary S.B."/>
            <person name="Piqani B."/>
            <person name="Smith C.L."/>
            <person name="Talamas J.A."/>
            <person name="Topham K."/>
            <person name="Totoki Y."/>
            <person name="Toyoda A."/>
            <person name="Wain H.M."/>
            <person name="Young S.K."/>
            <person name="Zeng Q."/>
            <person name="Zimmer A.R."/>
            <person name="Fujiyama A."/>
            <person name="Hattori M."/>
            <person name="Birren B.W."/>
            <person name="Sakaki Y."/>
            <person name="Lander E.S."/>
        </authorList>
    </citation>
    <scope>NUCLEOTIDE SEQUENCE [LARGE SCALE GENOMIC DNA]</scope>
</reference>
<reference key="3">
    <citation type="journal article" date="2010" name="Mol. Cancer Ther.">
        <title>A novel human dynactin-associated protein, dynAP, promotes activation of Akt, and ergosterol-related compounds induce dynAP-dependent apoptosis of human cancer cells.</title>
        <authorList>
            <person name="Kunoh T."/>
            <person name="Noda T."/>
            <person name="Koseki K."/>
            <person name="Sekigawa M."/>
            <person name="Takagi M."/>
            <person name="Shin-ya K."/>
            <person name="Goshima N."/>
            <person name="Iemura S."/>
            <person name="Natsume T."/>
            <person name="Wada S."/>
            <person name="Mukai Y."/>
            <person name="Ohta S."/>
            <person name="Sasaki R."/>
            <person name="Mizukami T."/>
        </authorList>
    </citation>
    <scope>FUNCTION</scope>
    <scope>INTERACTION WITH DCTN1 AND DCTN2</scope>
    <scope>TOPOLOGY</scope>
    <scope>SUBCELLULAR LOCATION</scope>
    <scope>TISSUE SPECIFICITY</scope>
</reference>
<feature type="chain" id="PRO_0000079315" description="Dynactin-associated protein">
    <location>
        <begin position="1"/>
        <end position="210"/>
    </location>
</feature>
<feature type="topological domain" description="Cytoplasmic" evidence="1">
    <location>
        <begin position="1"/>
        <end position="113"/>
    </location>
</feature>
<feature type="transmembrane region" description="Helical; Signal-anchor for type II membrane protein" evidence="1">
    <location>
        <begin position="114"/>
        <end position="134"/>
    </location>
</feature>
<feature type="topological domain" description="Extracellular" evidence="1">
    <location>
        <begin position="135"/>
        <end position="210"/>
    </location>
</feature>
<feature type="region of interest" description="Disordered" evidence="2">
    <location>
        <begin position="168"/>
        <end position="210"/>
    </location>
</feature>
<feature type="compositionally biased region" description="Low complexity" evidence="2">
    <location>
        <begin position="171"/>
        <end position="203"/>
    </location>
</feature>
<feature type="sequence variant" id="VAR_033751" description="In dbSNP:rs35428499.">
    <original>V</original>
    <variation>A</variation>
    <location>
        <position position="38"/>
    </location>
</feature>
<feature type="sequence variant" id="VAR_033752" description="In dbSNP:rs9947055.">
    <original>T</original>
    <variation>P</variation>
    <location>
        <position position="189"/>
    </location>
</feature>